<name>RECU_STRZP</name>
<accession>C1CIN1</accession>
<gene>
    <name evidence="1" type="primary">recU</name>
    <name type="ordered locus">SPP_0408</name>
</gene>
<keyword id="KW-0963">Cytoplasm</keyword>
<keyword id="KW-0227">DNA damage</keyword>
<keyword id="KW-0233">DNA recombination</keyword>
<keyword id="KW-0234">DNA repair</keyword>
<keyword id="KW-0255">Endonuclease</keyword>
<keyword id="KW-0378">Hydrolase</keyword>
<keyword id="KW-0460">Magnesium</keyword>
<keyword id="KW-0479">Metal-binding</keyword>
<keyword id="KW-0540">Nuclease</keyword>
<reference key="1">
    <citation type="journal article" date="2010" name="Genome Biol.">
        <title>Structure and dynamics of the pan-genome of Streptococcus pneumoniae and closely related species.</title>
        <authorList>
            <person name="Donati C."/>
            <person name="Hiller N.L."/>
            <person name="Tettelin H."/>
            <person name="Muzzi A."/>
            <person name="Croucher N.J."/>
            <person name="Angiuoli S.V."/>
            <person name="Oggioni M."/>
            <person name="Dunning Hotopp J.C."/>
            <person name="Hu F.Z."/>
            <person name="Riley D.R."/>
            <person name="Covacci A."/>
            <person name="Mitchell T.J."/>
            <person name="Bentley S.D."/>
            <person name="Kilian M."/>
            <person name="Ehrlich G.D."/>
            <person name="Rappuoli R."/>
            <person name="Moxon E.R."/>
            <person name="Masignani V."/>
        </authorList>
    </citation>
    <scope>NUCLEOTIDE SEQUENCE [LARGE SCALE GENOMIC DNA]</scope>
    <source>
        <strain>P1031</strain>
    </source>
</reference>
<proteinExistence type="inferred from homology"/>
<organism>
    <name type="scientific">Streptococcus pneumoniae (strain P1031)</name>
    <dbReference type="NCBI Taxonomy" id="488223"/>
    <lineage>
        <taxon>Bacteria</taxon>
        <taxon>Bacillati</taxon>
        <taxon>Bacillota</taxon>
        <taxon>Bacilli</taxon>
        <taxon>Lactobacillales</taxon>
        <taxon>Streptococcaceae</taxon>
        <taxon>Streptococcus</taxon>
    </lineage>
</organism>
<feature type="chain" id="PRO_1000193445" description="Holliday junction resolvase RecU">
    <location>
        <begin position="1"/>
        <end position="198"/>
    </location>
</feature>
<feature type="region of interest" description="Disordered" evidence="2">
    <location>
        <begin position="1"/>
        <end position="22"/>
    </location>
</feature>
<feature type="compositionally biased region" description="Polar residues" evidence="2">
    <location>
        <begin position="11"/>
        <end position="22"/>
    </location>
</feature>
<feature type="binding site" evidence="1">
    <location>
        <position position="81"/>
    </location>
    <ligand>
        <name>Mg(2+)</name>
        <dbReference type="ChEBI" id="CHEBI:18420"/>
    </ligand>
</feature>
<feature type="binding site" evidence="1">
    <location>
        <position position="83"/>
    </location>
    <ligand>
        <name>Mg(2+)</name>
        <dbReference type="ChEBI" id="CHEBI:18420"/>
    </ligand>
</feature>
<feature type="binding site" evidence="1">
    <location>
        <position position="96"/>
    </location>
    <ligand>
        <name>Mg(2+)</name>
        <dbReference type="ChEBI" id="CHEBI:18420"/>
    </ligand>
</feature>
<feature type="binding site" evidence="1">
    <location>
        <position position="115"/>
    </location>
    <ligand>
        <name>Mg(2+)</name>
        <dbReference type="ChEBI" id="CHEBI:18420"/>
    </ligand>
</feature>
<feature type="site" description="Transition state stabilizer" evidence="1">
    <location>
        <position position="98"/>
    </location>
</feature>
<evidence type="ECO:0000255" key="1">
    <source>
        <dbReference type="HAMAP-Rule" id="MF_00130"/>
    </source>
</evidence>
<evidence type="ECO:0000256" key="2">
    <source>
        <dbReference type="SAM" id="MobiDB-lite"/>
    </source>
</evidence>
<comment type="function">
    <text evidence="1">Endonuclease that resolves Holliday junction intermediates in genetic recombination. Cleaves mobile four-strand junctions by introducing symmetrical nicks in paired strands. Promotes annealing of linear ssDNA with homologous dsDNA. Required for DNA repair, homologous recombination and chromosome segregation.</text>
</comment>
<comment type="catalytic activity">
    <reaction evidence="1">
        <text>Endonucleolytic cleavage at a junction such as a reciprocal single-stranded crossover between two homologous DNA duplexes (Holliday junction).</text>
        <dbReference type="EC" id="3.1.21.10"/>
    </reaction>
</comment>
<comment type="cofactor">
    <cofactor evidence="1">
        <name>Mg(2+)</name>
        <dbReference type="ChEBI" id="CHEBI:18420"/>
    </cofactor>
    <text evidence="1">Binds 1 Mg(2+) ion per subunit.</text>
</comment>
<comment type="subcellular location">
    <subcellularLocation>
        <location evidence="1">Cytoplasm</location>
    </subcellularLocation>
</comment>
<comment type="similarity">
    <text evidence="1">Belongs to the RecU family.</text>
</comment>
<sequence>MVNYPHKVSSQKRQTSLSQPKNFANRGMSFEKMINATNDYYLSQGLAVIHKKPTPIQIVQVDYPQRSRAKIVEAYFRQASTTDYSGVYNGYYIDFEVKETKQKRAIPMKNFHPHQIQHMEQVLAQQGICFVLLHFSSQQETYLLPAFDLIRFYHQDKRQKSMPLEYIREYGYEIKAGAFPQIPYLNVIKEHLLGGKTR</sequence>
<protein>
    <recommendedName>
        <fullName evidence="1">Holliday junction resolvase RecU</fullName>
        <ecNumber evidence="1">3.1.21.10</ecNumber>
    </recommendedName>
    <alternativeName>
        <fullName evidence="1">Recombination protein U homolog</fullName>
    </alternativeName>
</protein>
<dbReference type="EC" id="3.1.21.10" evidence="1"/>
<dbReference type="EMBL" id="CP000920">
    <property type="protein sequence ID" value="ACO21818.1"/>
    <property type="molecule type" value="Genomic_DNA"/>
</dbReference>
<dbReference type="RefSeq" id="WP_000248788.1">
    <property type="nucleotide sequence ID" value="NC_012467.1"/>
</dbReference>
<dbReference type="SMR" id="C1CIN1"/>
<dbReference type="KEGG" id="spp:SPP_0408"/>
<dbReference type="HOGENOM" id="CLU_096340_0_0_9"/>
<dbReference type="GO" id="GO:0005737">
    <property type="term" value="C:cytoplasm"/>
    <property type="evidence" value="ECO:0007669"/>
    <property type="project" value="UniProtKB-SubCell"/>
</dbReference>
<dbReference type="GO" id="GO:0004519">
    <property type="term" value="F:endonuclease activity"/>
    <property type="evidence" value="ECO:0007669"/>
    <property type="project" value="UniProtKB-UniRule"/>
</dbReference>
<dbReference type="GO" id="GO:0000287">
    <property type="term" value="F:magnesium ion binding"/>
    <property type="evidence" value="ECO:0007669"/>
    <property type="project" value="UniProtKB-UniRule"/>
</dbReference>
<dbReference type="GO" id="GO:0003676">
    <property type="term" value="F:nucleic acid binding"/>
    <property type="evidence" value="ECO:0007669"/>
    <property type="project" value="InterPro"/>
</dbReference>
<dbReference type="GO" id="GO:0007059">
    <property type="term" value="P:chromosome segregation"/>
    <property type="evidence" value="ECO:0007669"/>
    <property type="project" value="UniProtKB-UniRule"/>
</dbReference>
<dbReference type="GO" id="GO:0006310">
    <property type="term" value="P:DNA recombination"/>
    <property type="evidence" value="ECO:0007669"/>
    <property type="project" value="UniProtKB-UniRule"/>
</dbReference>
<dbReference type="GO" id="GO:0006281">
    <property type="term" value="P:DNA repair"/>
    <property type="evidence" value="ECO:0007669"/>
    <property type="project" value="UniProtKB-UniRule"/>
</dbReference>
<dbReference type="CDD" id="cd22354">
    <property type="entry name" value="RecU-like"/>
    <property type="match status" value="1"/>
</dbReference>
<dbReference type="Gene3D" id="3.40.1350.10">
    <property type="match status" value="1"/>
</dbReference>
<dbReference type="HAMAP" id="MF_00130">
    <property type="entry name" value="RecU"/>
    <property type="match status" value="1"/>
</dbReference>
<dbReference type="InterPro" id="IPR004612">
    <property type="entry name" value="Resolv_RecU"/>
</dbReference>
<dbReference type="InterPro" id="IPR011335">
    <property type="entry name" value="Restrct_endonuc-II-like"/>
</dbReference>
<dbReference type="InterPro" id="IPR011856">
    <property type="entry name" value="tRNA_endonuc-like_dom_sf"/>
</dbReference>
<dbReference type="NCBIfam" id="NF002580">
    <property type="entry name" value="PRK02234.1-1"/>
    <property type="match status" value="1"/>
</dbReference>
<dbReference type="NCBIfam" id="NF002584">
    <property type="entry name" value="PRK02234.1-5"/>
    <property type="match status" value="1"/>
</dbReference>
<dbReference type="NCBIfam" id="TIGR00648">
    <property type="entry name" value="recU"/>
    <property type="match status" value="1"/>
</dbReference>
<dbReference type="Pfam" id="PF03838">
    <property type="entry name" value="RecU"/>
    <property type="match status" value="1"/>
</dbReference>
<dbReference type="PIRSF" id="PIRSF037785">
    <property type="entry name" value="RecU"/>
    <property type="match status" value="1"/>
</dbReference>
<dbReference type="SUPFAM" id="SSF52980">
    <property type="entry name" value="Restriction endonuclease-like"/>
    <property type="match status" value="1"/>
</dbReference>